<dbReference type="EC" id="1.17.1.8" evidence="1"/>
<dbReference type="EMBL" id="CP000867">
    <property type="protein sequence ID" value="ABX02544.1"/>
    <property type="molecule type" value="Genomic_DNA"/>
</dbReference>
<dbReference type="SMR" id="A9AB21"/>
<dbReference type="STRING" id="444158.MmarC6_1732"/>
<dbReference type="KEGG" id="mmx:MmarC6_1732"/>
<dbReference type="eggNOG" id="arCOG04393">
    <property type="taxonomic scope" value="Archaea"/>
</dbReference>
<dbReference type="HOGENOM" id="CLU_047479_2_1_2"/>
<dbReference type="OrthoDB" id="195035at2157"/>
<dbReference type="PhylomeDB" id="A9AB21"/>
<dbReference type="UniPathway" id="UPA00034">
    <property type="reaction ID" value="UER00018"/>
</dbReference>
<dbReference type="GO" id="GO:0005737">
    <property type="term" value="C:cytoplasm"/>
    <property type="evidence" value="ECO:0007669"/>
    <property type="project" value="UniProtKB-SubCell"/>
</dbReference>
<dbReference type="GO" id="GO:0008839">
    <property type="term" value="F:4-hydroxy-tetrahydrodipicolinate reductase"/>
    <property type="evidence" value="ECO:0007669"/>
    <property type="project" value="UniProtKB-EC"/>
</dbReference>
<dbReference type="GO" id="GO:0051287">
    <property type="term" value="F:NAD binding"/>
    <property type="evidence" value="ECO:0007669"/>
    <property type="project" value="UniProtKB-UniRule"/>
</dbReference>
<dbReference type="GO" id="GO:0050661">
    <property type="term" value="F:NADP binding"/>
    <property type="evidence" value="ECO:0007669"/>
    <property type="project" value="UniProtKB-UniRule"/>
</dbReference>
<dbReference type="GO" id="GO:0016726">
    <property type="term" value="F:oxidoreductase activity, acting on CH or CH2 groups, NAD or NADP as acceptor"/>
    <property type="evidence" value="ECO:0007669"/>
    <property type="project" value="UniProtKB-UniRule"/>
</dbReference>
<dbReference type="GO" id="GO:0019877">
    <property type="term" value="P:diaminopimelate biosynthetic process"/>
    <property type="evidence" value="ECO:0007669"/>
    <property type="project" value="UniProtKB-UniRule"/>
</dbReference>
<dbReference type="GO" id="GO:0009089">
    <property type="term" value="P:lysine biosynthetic process via diaminopimelate"/>
    <property type="evidence" value="ECO:0007669"/>
    <property type="project" value="UniProtKB-UniRule"/>
</dbReference>
<dbReference type="CDD" id="cd02274">
    <property type="entry name" value="DHDPR_N"/>
    <property type="match status" value="1"/>
</dbReference>
<dbReference type="FunFam" id="3.30.360.10:FF:000004">
    <property type="entry name" value="4-hydroxy-tetrahydrodipicolinate reductase"/>
    <property type="match status" value="1"/>
</dbReference>
<dbReference type="Gene3D" id="3.30.360.10">
    <property type="entry name" value="Dihydrodipicolinate Reductase, domain 2"/>
    <property type="match status" value="1"/>
</dbReference>
<dbReference type="Gene3D" id="3.40.50.720">
    <property type="entry name" value="NAD(P)-binding Rossmann-like Domain"/>
    <property type="match status" value="1"/>
</dbReference>
<dbReference type="HAMAP" id="MF_00102">
    <property type="entry name" value="DapB"/>
    <property type="match status" value="1"/>
</dbReference>
<dbReference type="InterPro" id="IPR022663">
    <property type="entry name" value="DapB_C"/>
</dbReference>
<dbReference type="InterPro" id="IPR000846">
    <property type="entry name" value="DapB_N"/>
</dbReference>
<dbReference type="InterPro" id="IPR022664">
    <property type="entry name" value="DapB_N_CS"/>
</dbReference>
<dbReference type="InterPro" id="IPR023940">
    <property type="entry name" value="DHDPR_bac"/>
</dbReference>
<dbReference type="InterPro" id="IPR036291">
    <property type="entry name" value="NAD(P)-bd_dom_sf"/>
</dbReference>
<dbReference type="NCBIfam" id="TIGR00036">
    <property type="entry name" value="dapB"/>
    <property type="match status" value="1"/>
</dbReference>
<dbReference type="PANTHER" id="PTHR20836:SF0">
    <property type="entry name" value="4-HYDROXY-TETRAHYDRODIPICOLINATE REDUCTASE 1, CHLOROPLASTIC-RELATED"/>
    <property type="match status" value="1"/>
</dbReference>
<dbReference type="PANTHER" id="PTHR20836">
    <property type="entry name" value="DIHYDRODIPICOLINATE REDUCTASE"/>
    <property type="match status" value="1"/>
</dbReference>
<dbReference type="Pfam" id="PF05173">
    <property type="entry name" value="DapB_C"/>
    <property type="match status" value="1"/>
</dbReference>
<dbReference type="Pfam" id="PF01113">
    <property type="entry name" value="DapB_N"/>
    <property type="match status" value="1"/>
</dbReference>
<dbReference type="PIRSF" id="PIRSF000161">
    <property type="entry name" value="DHPR"/>
    <property type="match status" value="1"/>
</dbReference>
<dbReference type="SUPFAM" id="SSF55347">
    <property type="entry name" value="Glyceraldehyde-3-phosphate dehydrogenase-like, C-terminal domain"/>
    <property type="match status" value="1"/>
</dbReference>
<dbReference type="SUPFAM" id="SSF51735">
    <property type="entry name" value="NAD(P)-binding Rossmann-fold domains"/>
    <property type="match status" value="1"/>
</dbReference>
<dbReference type="PROSITE" id="PS01298">
    <property type="entry name" value="DAPB"/>
    <property type="match status" value="1"/>
</dbReference>
<reference key="1">
    <citation type="submission" date="2007-10" db="EMBL/GenBank/DDBJ databases">
        <title>Complete sequence of Methanococcus maripaludis C6.</title>
        <authorList>
            <consortium name="US DOE Joint Genome Institute"/>
            <person name="Copeland A."/>
            <person name="Lucas S."/>
            <person name="Lapidus A."/>
            <person name="Barry K."/>
            <person name="Glavina del Rio T."/>
            <person name="Dalin E."/>
            <person name="Tice H."/>
            <person name="Pitluck S."/>
            <person name="Clum A."/>
            <person name="Schmutz J."/>
            <person name="Larimer F."/>
            <person name="Land M."/>
            <person name="Hauser L."/>
            <person name="Kyrpides N."/>
            <person name="Mikhailova N."/>
            <person name="Sieprawska-Lupa M."/>
            <person name="Whitman W.B."/>
            <person name="Richardson P."/>
        </authorList>
    </citation>
    <scope>NUCLEOTIDE SEQUENCE [LARGE SCALE GENOMIC DNA]</scope>
    <source>
        <strain>C6 / ATCC BAA-1332</strain>
    </source>
</reference>
<accession>A9AB21</accession>
<proteinExistence type="inferred from homology"/>
<evidence type="ECO:0000255" key="1">
    <source>
        <dbReference type="HAMAP-Rule" id="MF_00102"/>
    </source>
</evidence>
<evidence type="ECO:0000305" key="2"/>
<comment type="function">
    <text evidence="1">Catalyzes the conversion of 4-hydroxy-tetrahydrodipicolinate (HTPA) to tetrahydrodipicolinate.</text>
</comment>
<comment type="catalytic activity">
    <reaction evidence="1">
        <text>(S)-2,3,4,5-tetrahydrodipicolinate + NAD(+) + H2O = (2S,4S)-4-hydroxy-2,3,4,5-tetrahydrodipicolinate + NADH + H(+)</text>
        <dbReference type="Rhea" id="RHEA:35323"/>
        <dbReference type="ChEBI" id="CHEBI:15377"/>
        <dbReference type="ChEBI" id="CHEBI:15378"/>
        <dbReference type="ChEBI" id="CHEBI:16845"/>
        <dbReference type="ChEBI" id="CHEBI:57540"/>
        <dbReference type="ChEBI" id="CHEBI:57945"/>
        <dbReference type="ChEBI" id="CHEBI:67139"/>
        <dbReference type="EC" id="1.17.1.8"/>
    </reaction>
</comment>
<comment type="catalytic activity">
    <reaction evidence="1">
        <text>(S)-2,3,4,5-tetrahydrodipicolinate + NADP(+) + H2O = (2S,4S)-4-hydroxy-2,3,4,5-tetrahydrodipicolinate + NADPH + H(+)</text>
        <dbReference type="Rhea" id="RHEA:35331"/>
        <dbReference type="ChEBI" id="CHEBI:15377"/>
        <dbReference type="ChEBI" id="CHEBI:15378"/>
        <dbReference type="ChEBI" id="CHEBI:16845"/>
        <dbReference type="ChEBI" id="CHEBI:57783"/>
        <dbReference type="ChEBI" id="CHEBI:58349"/>
        <dbReference type="ChEBI" id="CHEBI:67139"/>
        <dbReference type="EC" id="1.17.1.8"/>
    </reaction>
</comment>
<comment type="pathway">
    <text evidence="1">Amino-acid biosynthesis; L-lysine biosynthesis via DAP pathway; (S)-tetrahydrodipicolinate from L-aspartate: step 4/4.</text>
</comment>
<comment type="subcellular location">
    <subcellularLocation>
        <location evidence="1">Cytoplasm</location>
    </subcellularLocation>
</comment>
<comment type="similarity">
    <text evidence="1">Belongs to the DapB family.</text>
</comment>
<comment type="caution">
    <text evidence="2">Was originally thought to be a dihydrodipicolinate reductase (DHDPR), catalyzing the conversion of dihydrodipicolinate to tetrahydrodipicolinate. However, it was shown in E.coli that the substrate of the enzymatic reaction is not dihydrodipicolinate (DHDP) but in fact (2S,4S)-4-hydroxy-2,3,4,5-tetrahydrodipicolinic acid (HTPA), the product released by the DapA-catalyzed reaction.</text>
</comment>
<sequence length="270" mass="29018">MVKVAVTGALGRMGSGIIKTITETDGLDVVAAIDIPNHPKKGLDIGELTGLGKIGVLLSTSDELEDVLKESGAEVLVDFTAAAPCVNTAKTASKLGVNLVIGTTGFTPEQRAEMEKAISENKVAATISQNYAVGVNIFFKTLELLAQKLGDYDIEILEMHHKFKKDAPSGTALRAAEIIQNNLNRDSNLIYGREGITGERTKEEICIHALRGGDIVGDHTVIFTTEGERLELSHRVTSRQSLVSGAIRAIQFVADKKEGIYNTFDVLDLN</sequence>
<gene>
    <name evidence="1" type="primary">dapB</name>
    <name type="ordered locus">MmarC6_1732</name>
</gene>
<protein>
    <recommendedName>
        <fullName evidence="1">4-hydroxy-tetrahydrodipicolinate reductase</fullName>
        <shortName evidence="1">HTPA reductase</shortName>
        <ecNumber evidence="1">1.17.1.8</ecNumber>
    </recommendedName>
</protein>
<feature type="chain" id="PRO_1000093980" description="4-hydroxy-tetrahydrodipicolinate reductase">
    <location>
        <begin position="1"/>
        <end position="270"/>
    </location>
</feature>
<feature type="active site" description="Proton donor/acceptor" evidence="1">
    <location>
        <position position="160"/>
    </location>
</feature>
<feature type="active site" description="Proton donor" evidence="1">
    <location>
        <position position="164"/>
    </location>
</feature>
<feature type="binding site" evidence="1">
    <location>
        <begin position="8"/>
        <end position="13"/>
    </location>
    <ligand>
        <name>NAD(+)</name>
        <dbReference type="ChEBI" id="CHEBI:57540"/>
    </ligand>
</feature>
<feature type="binding site" evidence="1">
    <location>
        <position position="34"/>
    </location>
    <ligand>
        <name>NAD(+)</name>
        <dbReference type="ChEBI" id="CHEBI:57540"/>
    </ligand>
</feature>
<feature type="binding site" evidence="1">
    <location>
        <begin position="102"/>
        <end position="104"/>
    </location>
    <ligand>
        <name>NAD(+)</name>
        <dbReference type="ChEBI" id="CHEBI:57540"/>
    </ligand>
</feature>
<feature type="binding site" evidence="1">
    <location>
        <begin position="128"/>
        <end position="131"/>
    </location>
    <ligand>
        <name>NAD(+)</name>
        <dbReference type="ChEBI" id="CHEBI:57540"/>
    </ligand>
</feature>
<feature type="binding site" evidence="1">
    <location>
        <position position="161"/>
    </location>
    <ligand>
        <name>(S)-2,3,4,5-tetrahydrodipicolinate</name>
        <dbReference type="ChEBI" id="CHEBI:16845"/>
    </ligand>
</feature>
<feature type="binding site" evidence="1">
    <location>
        <begin position="170"/>
        <end position="171"/>
    </location>
    <ligand>
        <name>(S)-2,3,4,5-tetrahydrodipicolinate</name>
        <dbReference type="ChEBI" id="CHEBI:16845"/>
    </ligand>
</feature>
<keyword id="KW-0028">Amino-acid biosynthesis</keyword>
<keyword id="KW-0963">Cytoplasm</keyword>
<keyword id="KW-0220">Diaminopimelate biosynthesis</keyword>
<keyword id="KW-0457">Lysine biosynthesis</keyword>
<keyword id="KW-0520">NAD</keyword>
<keyword id="KW-0521">NADP</keyword>
<keyword id="KW-0560">Oxidoreductase</keyword>
<name>DAPB_METM6</name>
<organism>
    <name type="scientific">Methanococcus maripaludis (strain C6 / ATCC BAA-1332)</name>
    <dbReference type="NCBI Taxonomy" id="444158"/>
    <lineage>
        <taxon>Archaea</taxon>
        <taxon>Methanobacteriati</taxon>
        <taxon>Methanobacteriota</taxon>
        <taxon>Methanomada group</taxon>
        <taxon>Methanococci</taxon>
        <taxon>Methanococcales</taxon>
        <taxon>Methanococcaceae</taxon>
        <taxon>Methanococcus</taxon>
    </lineage>
</organism>